<reference key="1">
    <citation type="submission" date="2008-05" db="EMBL/GenBank/DDBJ databases">
        <title>Genome sequence of Clostridium botulinum Ba4 strain 657.</title>
        <authorList>
            <person name="Shrivastava S."/>
            <person name="Brown J.L."/>
            <person name="Bruce D."/>
            <person name="Detter C."/>
            <person name="Munk C."/>
            <person name="Smith L.A."/>
            <person name="Smith T.J."/>
            <person name="Sutton G."/>
            <person name="Brettin T.S."/>
        </authorList>
    </citation>
    <scope>NUCLEOTIDE SEQUENCE [LARGE SCALE GENOMIC DNA]</scope>
    <source>
        <strain>657 / Type Ba4</strain>
    </source>
</reference>
<organism>
    <name type="scientific">Clostridium botulinum (strain 657 / Type Ba4)</name>
    <dbReference type="NCBI Taxonomy" id="515621"/>
    <lineage>
        <taxon>Bacteria</taxon>
        <taxon>Bacillati</taxon>
        <taxon>Bacillota</taxon>
        <taxon>Clostridia</taxon>
        <taxon>Eubacteriales</taxon>
        <taxon>Clostridiaceae</taxon>
        <taxon>Clostridium</taxon>
    </lineage>
</organism>
<name>RS14Z_CLOB6</name>
<dbReference type="EMBL" id="CP001083">
    <property type="protein sequence ID" value="ACQ52438.1"/>
    <property type="molecule type" value="Genomic_DNA"/>
</dbReference>
<dbReference type="RefSeq" id="WP_003360200.1">
    <property type="nucleotide sequence ID" value="NC_012658.1"/>
</dbReference>
<dbReference type="SMR" id="C3KVN8"/>
<dbReference type="KEGG" id="cbi:CLJ_B3776"/>
<dbReference type="HOGENOM" id="CLU_139869_3_0_9"/>
<dbReference type="Proteomes" id="UP000002333">
    <property type="component" value="Chromosome"/>
</dbReference>
<dbReference type="GO" id="GO:0005737">
    <property type="term" value="C:cytoplasm"/>
    <property type="evidence" value="ECO:0007669"/>
    <property type="project" value="UniProtKB-ARBA"/>
</dbReference>
<dbReference type="GO" id="GO:0015935">
    <property type="term" value="C:small ribosomal subunit"/>
    <property type="evidence" value="ECO:0007669"/>
    <property type="project" value="TreeGrafter"/>
</dbReference>
<dbReference type="GO" id="GO:0019843">
    <property type="term" value="F:rRNA binding"/>
    <property type="evidence" value="ECO:0007669"/>
    <property type="project" value="UniProtKB-UniRule"/>
</dbReference>
<dbReference type="GO" id="GO:0003735">
    <property type="term" value="F:structural constituent of ribosome"/>
    <property type="evidence" value="ECO:0007669"/>
    <property type="project" value="InterPro"/>
</dbReference>
<dbReference type="GO" id="GO:0008270">
    <property type="term" value="F:zinc ion binding"/>
    <property type="evidence" value="ECO:0007669"/>
    <property type="project" value="UniProtKB-UniRule"/>
</dbReference>
<dbReference type="GO" id="GO:0006412">
    <property type="term" value="P:translation"/>
    <property type="evidence" value="ECO:0007669"/>
    <property type="project" value="UniProtKB-UniRule"/>
</dbReference>
<dbReference type="FunFam" id="4.10.830.10:FF:000001">
    <property type="entry name" value="30S ribosomal protein S14 type Z"/>
    <property type="match status" value="1"/>
</dbReference>
<dbReference type="Gene3D" id="4.10.830.10">
    <property type="entry name" value="30s Ribosomal Protein S14, Chain N"/>
    <property type="match status" value="1"/>
</dbReference>
<dbReference type="HAMAP" id="MF_01364_B">
    <property type="entry name" value="Ribosomal_uS14_2_B"/>
    <property type="match status" value="1"/>
</dbReference>
<dbReference type="InterPro" id="IPR001209">
    <property type="entry name" value="Ribosomal_uS14"/>
</dbReference>
<dbReference type="InterPro" id="IPR023053">
    <property type="entry name" value="Ribosomal_uS14_bact"/>
</dbReference>
<dbReference type="InterPro" id="IPR043140">
    <property type="entry name" value="Ribosomal_uS14_sf"/>
</dbReference>
<dbReference type="NCBIfam" id="NF005974">
    <property type="entry name" value="PRK08061.1"/>
    <property type="match status" value="1"/>
</dbReference>
<dbReference type="PANTHER" id="PTHR19836">
    <property type="entry name" value="30S RIBOSOMAL PROTEIN S14"/>
    <property type="match status" value="1"/>
</dbReference>
<dbReference type="PANTHER" id="PTHR19836:SF19">
    <property type="entry name" value="SMALL RIBOSOMAL SUBUNIT PROTEIN US14M"/>
    <property type="match status" value="1"/>
</dbReference>
<dbReference type="Pfam" id="PF00253">
    <property type="entry name" value="Ribosomal_S14"/>
    <property type="match status" value="1"/>
</dbReference>
<dbReference type="SUPFAM" id="SSF57716">
    <property type="entry name" value="Glucocorticoid receptor-like (DNA-binding domain)"/>
    <property type="match status" value="1"/>
</dbReference>
<accession>C3KVN8</accession>
<comment type="function">
    <text evidence="1">Binds 16S rRNA, required for the assembly of 30S particles and may also be responsible for determining the conformation of the 16S rRNA at the A site.</text>
</comment>
<comment type="cofactor">
    <cofactor evidence="1">
        <name>Zn(2+)</name>
        <dbReference type="ChEBI" id="CHEBI:29105"/>
    </cofactor>
    <text evidence="1">Binds 1 zinc ion per subunit.</text>
</comment>
<comment type="subunit">
    <text evidence="1">Part of the 30S ribosomal subunit. Contacts proteins S3 and S10.</text>
</comment>
<comment type="similarity">
    <text evidence="1">Belongs to the universal ribosomal protein uS14 family. Zinc-binding uS14 subfamily.</text>
</comment>
<proteinExistence type="inferred from homology"/>
<keyword id="KW-0479">Metal-binding</keyword>
<keyword id="KW-0687">Ribonucleoprotein</keyword>
<keyword id="KW-0689">Ribosomal protein</keyword>
<keyword id="KW-0694">RNA-binding</keyword>
<keyword id="KW-0699">rRNA-binding</keyword>
<keyword id="KW-0862">Zinc</keyword>
<protein>
    <recommendedName>
        <fullName evidence="1">Small ribosomal subunit protein uS14</fullName>
    </recommendedName>
    <alternativeName>
        <fullName evidence="2">30S ribosomal protein S14 type Z</fullName>
    </alternativeName>
</protein>
<feature type="chain" id="PRO_1000214907" description="Small ribosomal subunit protein uS14">
    <location>
        <begin position="1"/>
        <end position="61"/>
    </location>
</feature>
<feature type="binding site" evidence="1">
    <location>
        <position position="24"/>
    </location>
    <ligand>
        <name>Zn(2+)</name>
        <dbReference type="ChEBI" id="CHEBI:29105"/>
    </ligand>
</feature>
<feature type="binding site" evidence="1">
    <location>
        <position position="27"/>
    </location>
    <ligand>
        <name>Zn(2+)</name>
        <dbReference type="ChEBI" id="CHEBI:29105"/>
    </ligand>
</feature>
<feature type="binding site" evidence="1">
    <location>
        <position position="40"/>
    </location>
    <ligand>
        <name>Zn(2+)</name>
        <dbReference type="ChEBI" id="CHEBI:29105"/>
    </ligand>
</feature>
<feature type="binding site" evidence="1">
    <location>
        <position position="43"/>
    </location>
    <ligand>
        <name>Zn(2+)</name>
        <dbReference type="ChEBI" id="CHEBI:29105"/>
    </ligand>
</feature>
<evidence type="ECO:0000255" key="1">
    <source>
        <dbReference type="HAMAP-Rule" id="MF_01364"/>
    </source>
</evidence>
<evidence type="ECO:0000305" key="2"/>
<sequence>MARKALIEKWNKTPKYSTRAYTRCRICGRPHAVLKKYGICRICFRELAYKGEIPGCKKASW</sequence>
<gene>
    <name evidence="1" type="primary">rpsZ</name>
    <name evidence="1" type="synonym">rpsN</name>
    <name type="ordered locus">CLJ_B3776</name>
</gene>